<protein>
    <recommendedName>
        <fullName evidence="1">Small ribosomal subunit protein eS1</fullName>
    </recommendedName>
    <alternativeName>
        <fullName evidence="4">40S ribosomal protein S3a</fullName>
    </alternativeName>
    <alternativeName>
        <fullName>LmS3a-related protein</fullName>
        <shortName>LmS3arp</shortName>
    </alternativeName>
</protein>
<organism>
    <name type="scientific">Leishmania major</name>
    <dbReference type="NCBI Taxonomy" id="5664"/>
    <lineage>
        <taxon>Eukaryota</taxon>
        <taxon>Discoba</taxon>
        <taxon>Euglenozoa</taxon>
        <taxon>Kinetoplastea</taxon>
        <taxon>Metakinetoplastina</taxon>
        <taxon>Trypanosomatida</taxon>
        <taxon>Trypanosomatidae</taxon>
        <taxon>Leishmaniinae</taxon>
        <taxon>Leishmania</taxon>
    </lineage>
</organism>
<gene>
    <name type="ORF">LmjF.35.0400</name>
</gene>
<gene>
    <name type="ORF">LmjF.35.0410</name>
</gene>
<gene>
    <name type="ORF">LmjF.35.0420</name>
</gene>
<accession>Q4FX73</accession>
<accession>E9AEL7</accession>
<accession>Q9U4U0</accession>
<comment type="subunit">
    <text evidence="1">Component of the small ribosomal subunit. Mature ribosomes consist of a small (40S) and a large (60S) subunit. The 40S subunit contains about 33 different proteins and 1 molecule of RNA (18S). The 60S subunit contains about 49 different proteins and 3 molecules of RNA (25S, 5.8S and 5S).</text>
</comment>
<comment type="subcellular location">
    <subcellularLocation>
        <location evidence="1">Cytoplasm</location>
    </subcellularLocation>
    <subcellularLocation>
        <location evidence="1 3">Nucleus</location>
    </subcellularLocation>
</comment>
<comment type="similarity">
    <text evidence="1">Belongs to the eukaryotic ribosomal protein eS1 family.</text>
</comment>
<sequence length="264" mass="30008">MALGKNKRISKGGKRGKRGKAQETMARKEWYDVVAPANFEKRQFAKTICNKTQGTRIAADVLRGRVFEANLADLNQSAGEEEAYRKVRFTVQEVQGRNLLTQFHSMEVTTDKMASLLRKWCTTMETTVEVKTADGYTMRLFVVAFTKPQANQQSRNCYAKQRLVKWLRMRITKMIKRRLSKVQIKEAVSLLTRNVLSDALVRRCNPILPLRELRIRKVRVVRTPKFDAQALLSAHGTIPASVEADQREVEEAVEAAPAAEKAAE</sequence>
<evidence type="ECO:0000255" key="1">
    <source>
        <dbReference type="HAMAP-Rule" id="MF_03122"/>
    </source>
</evidence>
<evidence type="ECO:0000256" key="2">
    <source>
        <dbReference type="SAM" id="MobiDB-lite"/>
    </source>
</evidence>
<evidence type="ECO:0000269" key="3">
    <source>
    </source>
</evidence>
<evidence type="ECO:0000305" key="4"/>
<name>RS3A_LEIMA</name>
<reference key="1">
    <citation type="journal article" date="1999" name="Gene">
        <title>Cloning of a Leishmania major gene encoding for an antigen with extensive homology to ribosomal protein S3a.</title>
        <authorList>
            <person name="Zemzoumi K."/>
            <person name="Guilvard E."/>
            <person name="Sereno D."/>
            <person name="Preto A."/>
            <person name="Benlemlih M."/>
            <person name="Cordeiro Da Silva A."/>
            <person name="Lemesre J.-L."/>
            <person name="Ouaissi A."/>
        </authorList>
    </citation>
    <scope>NUCLEOTIDE SEQUENCE [MRNA]</scope>
    <scope>SUBCELLULAR LOCATION</scope>
    <source>
        <strain>LEM 265</strain>
    </source>
</reference>
<reference key="2">
    <citation type="journal article" date="2005" name="Science">
        <title>The genome of the kinetoplastid parasite, Leishmania major.</title>
        <authorList>
            <person name="Ivens A.C."/>
            <person name="Peacock C.S."/>
            <person name="Worthey E.A."/>
            <person name="Murphy L."/>
            <person name="Aggarwal G."/>
            <person name="Berriman M."/>
            <person name="Sisk E."/>
            <person name="Rajandream M.A."/>
            <person name="Adlem E."/>
            <person name="Aert R."/>
            <person name="Anupama A."/>
            <person name="Apostolou Z."/>
            <person name="Attipoe P."/>
            <person name="Bason N."/>
            <person name="Bauser C."/>
            <person name="Beck A."/>
            <person name="Beverley S.M."/>
            <person name="Bianchettin G."/>
            <person name="Borzym K."/>
            <person name="Bothe G."/>
            <person name="Bruschi C.V."/>
            <person name="Collins M."/>
            <person name="Cadag E."/>
            <person name="Ciarloni L."/>
            <person name="Clayton C."/>
            <person name="Coulson R.M.R."/>
            <person name="Cronin A."/>
            <person name="Cruz A.K."/>
            <person name="Davies R.M."/>
            <person name="De Gaudenzi J."/>
            <person name="Dobson D.E."/>
            <person name="Duesterhoeft A."/>
            <person name="Fazelina G."/>
            <person name="Fosker N."/>
            <person name="Frasch A.C."/>
            <person name="Fraser A."/>
            <person name="Fuchs M."/>
            <person name="Gabel C."/>
            <person name="Goble A."/>
            <person name="Goffeau A."/>
            <person name="Harris D."/>
            <person name="Hertz-Fowler C."/>
            <person name="Hilbert H."/>
            <person name="Horn D."/>
            <person name="Huang Y."/>
            <person name="Klages S."/>
            <person name="Knights A."/>
            <person name="Kube M."/>
            <person name="Larke N."/>
            <person name="Litvin L."/>
            <person name="Lord A."/>
            <person name="Louie T."/>
            <person name="Marra M."/>
            <person name="Masuy D."/>
            <person name="Matthews K."/>
            <person name="Michaeli S."/>
            <person name="Mottram J.C."/>
            <person name="Mueller-Auer S."/>
            <person name="Munden H."/>
            <person name="Nelson S."/>
            <person name="Norbertczak H."/>
            <person name="Oliver K."/>
            <person name="O'neil S."/>
            <person name="Pentony M."/>
            <person name="Pohl T.M."/>
            <person name="Price C."/>
            <person name="Purnelle B."/>
            <person name="Quail M.A."/>
            <person name="Rabbinowitsch E."/>
            <person name="Reinhardt R."/>
            <person name="Rieger M."/>
            <person name="Rinta J."/>
            <person name="Robben J."/>
            <person name="Robertson L."/>
            <person name="Ruiz J.C."/>
            <person name="Rutter S."/>
            <person name="Saunders D."/>
            <person name="Schaefer M."/>
            <person name="Schein J."/>
            <person name="Schwartz D.C."/>
            <person name="Seeger K."/>
            <person name="Seyler A."/>
            <person name="Sharp S."/>
            <person name="Shin H."/>
            <person name="Sivam D."/>
            <person name="Squares R."/>
            <person name="Squares S."/>
            <person name="Tosato V."/>
            <person name="Vogt C."/>
            <person name="Volckaert G."/>
            <person name="Wambutt R."/>
            <person name="Warren T."/>
            <person name="Wedler H."/>
            <person name="Woodward J."/>
            <person name="Zhou S."/>
            <person name="Zimmermann W."/>
            <person name="Smith D.F."/>
            <person name="Blackwell J.M."/>
            <person name="Stuart K.D."/>
            <person name="Barrell B.G."/>
            <person name="Myler P.J."/>
        </authorList>
    </citation>
    <scope>NUCLEOTIDE SEQUENCE [LARGE SCALE GENOMIC DNA]</scope>
    <source>
        <strain>MHOM/IL/81/Friedlin</strain>
    </source>
</reference>
<proteinExistence type="evidence at protein level"/>
<keyword id="KW-0002">3D-structure</keyword>
<keyword id="KW-0963">Cytoplasm</keyword>
<keyword id="KW-0539">Nucleus</keyword>
<keyword id="KW-1185">Reference proteome</keyword>
<keyword id="KW-0687">Ribonucleoprotein</keyword>
<keyword id="KW-0689">Ribosomal protein</keyword>
<dbReference type="EMBL" id="AF145757">
    <property type="protein sequence ID" value="AAF15410.1"/>
    <property type="molecule type" value="mRNA"/>
</dbReference>
<dbReference type="EMBL" id="FR796431">
    <property type="protein sequence ID" value="CBZ12670.1"/>
    <property type="molecule type" value="Genomic_DNA"/>
</dbReference>
<dbReference type="EMBL" id="FR796431">
    <property type="protein sequence ID" value="CBZ12671.1"/>
    <property type="molecule type" value="Genomic_DNA"/>
</dbReference>
<dbReference type="EMBL" id="FR796431">
    <property type="protein sequence ID" value="CBZ12672.1"/>
    <property type="molecule type" value="Genomic_DNA"/>
</dbReference>
<dbReference type="RefSeq" id="XP_003722437.1">
    <property type="nucleotide sequence ID" value="XM_003722389.1"/>
</dbReference>
<dbReference type="RefSeq" id="XP_003722438.1">
    <property type="nucleotide sequence ID" value="XM_003722390.1"/>
</dbReference>
<dbReference type="RefSeq" id="XP_003722439.1">
    <property type="nucleotide sequence ID" value="XM_003722391.1"/>
</dbReference>
<dbReference type="PDB" id="8A3W">
    <property type="method" value="EM"/>
    <property type="resolution" value="2.89 A"/>
    <property type="chains" value="SA=1-264"/>
</dbReference>
<dbReference type="PDB" id="8A98">
    <property type="method" value="EM"/>
    <property type="resolution" value="2.46 A"/>
    <property type="chains" value="SA=1-264"/>
</dbReference>
<dbReference type="PDB" id="8OVJ">
    <property type="method" value="EM"/>
    <property type="resolution" value="2.40 A"/>
    <property type="chains" value="SA=1-264"/>
</dbReference>
<dbReference type="PDB" id="8QHU">
    <property type="method" value="EM"/>
    <property type="resolution" value="2.72 A"/>
    <property type="chains" value="SA=1-264"/>
</dbReference>
<dbReference type="PDB" id="8QIE">
    <property type="method" value="EM"/>
    <property type="resolution" value="2.43 A"/>
    <property type="chains" value="SA=1-264"/>
</dbReference>
<dbReference type="PDB" id="8RXH">
    <property type="method" value="EM"/>
    <property type="resolution" value="2.93 A"/>
    <property type="chains" value="SA=1-264"/>
</dbReference>
<dbReference type="PDB" id="8RXX">
    <property type="method" value="EM"/>
    <property type="resolution" value="2.97 A"/>
    <property type="chains" value="SA=1-264"/>
</dbReference>
<dbReference type="PDBsum" id="8A3W"/>
<dbReference type="PDBsum" id="8A98"/>
<dbReference type="PDBsum" id="8OVJ"/>
<dbReference type="PDBsum" id="8QHU"/>
<dbReference type="PDBsum" id="8QIE"/>
<dbReference type="PDBsum" id="8RXH"/>
<dbReference type="PDBsum" id="8RXX"/>
<dbReference type="EMDB" id="EMD-15124"/>
<dbReference type="EMDB" id="EMD-15272"/>
<dbReference type="EMDB" id="EMD-17216"/>
<dbReference type="EMDB" id="EMD-18419"/>
<dbReference type="EMDB" id="EMD-18437"/>
<dbReference type="EMDB" id="EMD-19576"/>
<dbReference type="EMDB" id="EMD-19582"/>
<dbReference type="SMR" id="Q4FX73"/>
<dbReference type="FunCoup" id="Q4FX73">
    <property type="interactions" value="405"/>
</dbReference>
<dbReference type="STRING" id="5664.Q4FX73"/>
<dbReference type="EnsemblProtists" id="CBZ12670">
    <property type="protein sequence ID" value="CBZ12670"/>
    <property type="gene ID" value="LMJF_35_0400"/>
</dbReference>
<dbReference type="EnsemblProtists" id="CBZ12671">
    <property type="protein sequence ID" value="CBZ12671"/>
    <property type="gene ID" value="LMJF_35_0410"/>
</dbReference>
<dbReference type="EnsemblProtists" id="CBZ12672">
    <property type="protein sequence ID" value="CBZ12672"/>
    <property type="gene ID" value="LMJF_35_0420"/>
</dbReference>
<dbReference type="KEGG" id="lma:LMJF_35_0400"/>
<dbReference type="KEGG" id="lma:LMJF_35_0410"/>
<dbReference type="KEGG" id="lma:LMJF_35_0420"/>
<dbReference type="VEuPathDB" id="TriTrypDB:LmjF.35.0420"/>
<dbReference type="VEuPathDB" id="TriTrypDB:LMJFC_350009800"/>
<dbReference type="VEuPathDB" id="TriTrypDB:LMJLV39_350009400"/>
<dbReference type="VEuPathDB" id="TriTrypDB:LMJSD75_350009300"/>
<dbReference type="eggNOG" id="KOG1628">
    <property type="taxonomic scope" value="Eukaryota"/>
</dbReference>
<dbReference type="InParanoid" id="Q4FX73"/>
<dbReference type="OMA" id="TRFKGHE"/>
<dbReference type="Proteomes" id="UP000000542">
    <property type="component" value="Chromosome 35"/>
</dbReference>
<dbReference type="GO" id="GO:0005829">
    <property type="term" value="C:cytosol"/>
    <property type="evidence" value="ECO:0000318"/>
    <property type="project" value="GO_Central"/>
</dbReference>
<dbReference type="GO" id="GO:0022627">
    <property type="term" value="C:cytosolic small ribosomal subunit"/>
    <property type="evidence" value="ECO:0007669"/>
    <property type="project" value="UniProtKB-UniRule"/>
</dbReference>
<dbReference type="GO" id="GO:0005654">
    <property type="term" value="C:nucleoplasm"/>
    <property type="evidence" value="ECO:0000266"/>
    <property type="project" value="GeneDB"/>
</dbReference>
<dbReference type="GO" id="GO:0003735">
    <property type="term" value="F:structural constituent of ribosome"/>
    <property type="evidence" value="ECO:0007669"/>
    <property type="project" value="UniProtKB-UniRule"/>
</dbReference>
<dbReference type="GO" id="GO:0006412">
    <property type="term" value="P:translation"/>
    <property type="evidence" value="ECO:0007669"/>
    <property type="project" value="UniProtKB-UniRule"/>
</dbReference>
<dbReference type="HAMAP" id="MF_03122">
    <property type="entry name" value="Ribosomal_eS1_euk"/>
    <property type="match status" value="1"/>
</dbReference>
<dbReference type="InterPro" id="IPR001593">
    <property type="entry name" value="Ribosomal_eS1"/>
</dbReference>
<dbReference type="InterPro" id="IPR027500">
    <property type="entry name" value="Ribosomal_eS1_euk"/>
</dbReference>
<dbReference type="PANTHER" id="PTHR11830">
    <property type="entry name" value="40S RIBOSOMAL PROTEIN S3A"/>
    <property type="match status" value="1"/>
</dbReference>
<dbReference type="Pfam" id="PF01015">
    <property type="entry name" value="Ribosomal_S3Ae"/>
    <property type="match status" value="1"/>
</dbReference>
<dbReference type="SMART" id="SM01397">
    <property type="entry name" value="Ribosomal_S3Ae"/>
    <property type="match status" value="1"/>
</dbReference>
<feature type="initiator methionine" description="Removed" evidence="1">
    <location>
        <position position="1"/>
    </location>
</feature>
<feature type="chain" id="PRO_0000389347" description="Small ribosomal subunit protein eS1">
    <location>
        <begin position="2"/>
        <end position="264"/>
    </location>
</feature>
<feature type="region of interest" description="Disordered" evidence="2">
    <location>
        <begin position="1"/>
        <end position="23"/>
    </location>
</feature>
<feature type="compositionally biased region" description="Basic residues" evidence="2">
    <location>
        <begin position="1"/>
        <end position="19"/>
    </location>
</feature>
<feature type="sequence conflict" description="In Ref. 1; AAF15410." evidence="4" ref="1">
    <original>S</original>
    <variation>N</variation>
    <location>
        <position position="115"/>
    </location>
</feature>